<sequence>MGLFDFSVKELHDKLVKKEISPFDLVSESFNRIESVEDKVGSFITLNKEAAFGVAEELGDAGIDPNNMLSGLPIGIKDNIVTKNLRTTAASKILENFDPIYDATVVSKLKNAQTINIGKLNMDEFAMGSSTETSYFHKTHNPWDLSRVPGGSSGGSASAVAAGEVLFSLGSDTGGSIRQPAAFCGVVGMKPTYGRVSRFGLIAFASSLDQIGPITKNVEDNAYLLEAISGLDANDSTSINQPVERFSNSLTGDIKGLRIGVPKEYLGEGVDPGVKQAVLDALKTLEKLGATWDEVSLPHSEYGVASYYILASSEASSNLSRFDGVRYGYRSPNATTLEELYTKTRSEGFGDEVKRRIMLGTYALSSGYYDAYYKKAQQARTLIKQDFVNVFENYDVIIGPSSPTTAFKIDGMINDPITMYSNDILTVPINLAGVPAISVPCGFSDGLPVGLQIIGNYFEESLLYKVAHAFEQETTFHKEKPNL</sequence>
<dbReference type="EC" id="6.3.5.7" evidence="1"/>
<dbReference type="EMBL" id="FM242711">
    <property type="protein sequence ID" value="CAS05529.1"/>
    <property type="molecule type" value="Genomic_DNA"/>
</dbReference>
<dbReference type="RefSeq" id="WP_003725532.1">
    <property type="nucleotide sequence ID" value="NC_012488.1"/>
</dbReference>
<dbReference type="SMR" id="C1KW54"/>
<dbReference type="KEGG" id="lmc:Lm4b_01769"/>
<dbReference type="HOGENOM" id="CLU_009600_0_3_9"/>
<dbReference type="GO" id="GO:0030956">
    <property type="term" value="C:glutamyl-tRNA(Gln) amidotransferase complex"/>
    <property type="evidence" value="ECO:0007669"/>
    <property type="project" value="InterPro"/>
</dbReference>
<dbReference type="GO" id="GO:0005524">
    <property type="term" value="F:ATP binding"/>
    <property type="evidence" value="ECO:0007669"/>
    <property type="project" value="UniProtKB-KW"/>
</dbReference>
<dbReference type="GO" id="GO:0050567">
    <property type="term" value="F:glutaminyl-tRNA synthase (glutamine-hydrolyzing) activity"/>
    <property type="evidence" value="ECO:0007669"/>
    <property type="project" value="UniProtKB-UniRule"/>
</dbReference>
<dbReference type="GO" id="GO:0006412">
    <property type="term" value="P:translation"/>
    <property type="evidence" value="ECO:0007669"/>
    <property type="project" value="UniProtKB-UniRule"/>
</dbReference>
<dbReference type="Gene3D" id="3.90.1300.10">
    <property type="entry name" value="Amidase signature (AS) domain"/>
    <property type="match status" value="1"/>
</dbReference>
<dbReference type="HAMAP" id="MF_00120">
    <property type="entry name" value="GatA"/>
    <property type="match status" value="1"/>
</dbReference>
<dbReference type="InterPro" id="IPR000120">
    <property type="entry name" value="Amidase"/>
</dbReference>
<dbReference type="InterPro" id="IPR020556">
    <property type="entry name" value="Amidase_CS"/>
</dbReference>
<dbReference type="InterPro" id="IPR023631">
    <property type="entry name" value="Amidase_dom"/>
</dbReference>
<dbReference type="InterPro" id="IPR036928">
    <property type="entry name" value="AS_sf"/>
</dbReference>
<dbReference type="InterPro" id="IPR004412">
    <property type="entry name" value="GatA"/>
</dbReference>
<dbReference type="NCBIfam" id="TIGR00132">
    <property type="entry name" value="gatA"/>
    <property type="match status" value="1"/>
</dbReference>
<dbReference type="PANTHER" id="PTHR11895:SF151">
    <property type="entry name" value="GLUTAMYL-TRNA(GLN) AMIDOTRANSFERASE SUBUNIT A"/>
    <property type="match status" value="1"/>
</dbReference>
<dbReference type="PANTHER" id="PTHR11895">
    <property type="entry name" value="TRANSAMIDASE"/>
    <property type="match status" value="1"/>
</dbReference>
<dbReference type="Pfam" id="PF01425">
    <property type="entry name" value="Amidase"/>
    <property type="match status" value="1"/>
</dbReference>
<dbReference type="SUPFAM" id="SSF75304">
    <property type="entry name" value="Amidase signature (AS) enzymes"/>
    <property type="match status" value="1"/>
</dbReference>
<dbReference type="PROSITE" id="PS00571">
    <property type="entry name" value="AMIDASES"/>
    <property type="match status" value="1"/>
</dbReference>
<gene>
    <name evidence="1" type="primary">gatA</name>
    <name type="ordered locus">Lm4b_01769</name>
</gene>
<comment type="function">
    <text evidence="1">Allows the formation of correctly charged Gln-tRNA(Gln) through the transamidation of misacylated Glu-tRNA(Gln) in organisms which lack glutaminyl-tRNA synthetase. The reaction takes place in the presence of glutamine and ATP through an activated gamma-phospho-Glu-tRNA(Gln).</text>
</comment>
<comment type="catalytic activity">
    <reaction evidence="1">
        <text>L-glutamyl-tRNA(Gln) + L-glutamine + ATP + H2O = L-glutaminyl-tRNA(Gln) + L-glutamate + ADP + phosphate + H(+)</text>
        <dbReference type="Rhea" id="RHEA:17521"/>
        <dbReference type="Rhea" id="RHEA-COMP:9681"/>
        <dbReference type="Rhea" id="RHEA-COMP:9684"/>
        <dbReference type="ChEBI" id="CHEBI:15377"/>
        <dbReference type="ChEBI" id="CHEBI:15378"/>
        <dbReference type="ChEBI" id="CHEBI:29985"/>
        <dbReference type="ChEBI" id="CHEBI:30616"/>
        <dbReference type="ChEBI" id="CHEBI:43474"/>
        <dbReference type="ChEBI" id="CHEBI:58359"/>
        <dbReference type="ChEBI" id="CHEBI:78520"/>
        <dbReference type="ChEBI" id="CHEBI:78521"/>
        <dbReference type="ChEBI" id="CHEBI:456216"/>
        <dbReference type="EC" id="6.3.5.7"/>
    </reaction>
</comment>
<comment type="subunit">
    <text evidence="1">Heterotrimer of A, B and C subunits.</text>
</comment>
<comment type="similarity">
    <text evidence="1">Belongs to the amidase family. GatA subfamily.</text>
</comment>
<reference key="1">
    <citation type="journal article" date="2012" name="BMC Genomics">
        <title>Comparative genomics and transcriptomics of lineages I, II, and III strains of Listeria monocytogenes.</title>
        <authorList>
            <person name="Hain T."/>
            <person name="Ghai R."/>
            <person name="Billion A."/>
            <person name="Kuenne C.T."/>
            <person name="Steinweg C."/>
            <person name="Izar B."/>
            <person name="Mohamed W."/>
            <person name="Mraheil M."/>
            <person name="Domann E."/>
            <person name="Schaffrath S."/>
            <person name="Karst U."/>
            <person name="Goesmann A."/>
            <person name="Oehm S."/>
            <person name="Puhler A."/>
            <person name="Merkl R."/>
            <person name="Vorwerk S."/>
            <person name="Glaser P."/>
            <person name="Garrido P."/>
            <person name="Rusniok C."/>
            <person name="Buchrieser C."/>
            <person name="Goebel W."/>
            <person name="Chakraborty T."/>
        </authorList>
    </citation>
    <scope>NUCLEOTIDE SEQUENCE [LARGE SCALE GENOMIC DNA]</scope>
    <source>
        <strain>CLIP80459</strain>
    </source>
</reference>
<accession>C1KW54</accession>
<keyword id="KW-0067">ATP-binding</keyword>
<keyword id="KW-0436">Ligase</keyword>
<keyword id="KW-0547">Nucleotide-binding</keyword>
<keyword id="KW-0648">Protein biosynthesis</keyword>
<proteinExistence type="inferred from homology"/>
<name>GATA_LISMC</name>
<protein>
    <recommendedName>
        <fullName evidence="1">Glutamyl-tRNA(Gln) amidotransferase subunit A</fullName>
        <shortName evidence="1">Glu-ADT subunit A</shortName>
        <ecNumber evidence="1">6.3.5.7</ecNumber>
    </recommendedName>
</protein>
<evidence type="ECO:0000255" key="1">
    <source>
        <dbReference type="HAMAP-Rule" id="MF_00120"/>
    </source>
</evidence>
<feature type="chain" id="PRO_1000203039" description="Glutamyl-tRNA(Gln) amidotransferase subunit A">
    <location>
        <begin position="1"/>
        <end position="483"/>
    </location>
</feature>
<feature type="active site" description="Charge relay system" evidence="1">
    <location>
        <position position="77"/>
    </location>
</feature>
<feature type="active site" description="Charge relay system" evidence="1">
    <location>
        <position position="152"/>
    </location>
</feature>
<feature type="active site" description="Acyl-ester intermediate" evidence="1">
    <location>
        <position position="176"/>
    </location>
</feature>
<organism>
    <name type="scientific">Listeria monocytogenes serotype 4b (strain CLIP80459)</name>
    <dbReference type="NCBI Taxonomy" id="568819"/>
    <lineage>
        <taxon>Bacteria</taxon>
        <taxon>Bacillati</taxon>
        <taxon>Bacillota</taxon>
        <taxon>Bacilli</taxon>
        <taxon>Bacillales</taxon>
        <taxon>Listeriaceae</taxon>
        <taxon>Listeria</taxon>
    </lineage>
</organism>